<name>YIDC2_LACLA</name>
<feature type="signal peptide" evidence="1">
    <location>
        <begin position="1"/>
        <end position="23"/>
    </location>
</feature>
<feature type="chain" id="PRO_0000020382" description="Membrane protein insertase YidC 2">
    <location>
        <begin position="24"/>
        <end position="320"/>
    </location>
</feature>
<feature type="transmembrane region" description="Helical" evidence="1">
    <location>
        <begin position="68"/>
        <end position="88"/>
    </location>
</feature>
<feature type="transmembrane region" description="Helical" evidence="1">
    <location>
        <begin position="142"/>
        <end position="162"/>
    </location>
</feature>
<feature type="transmembrane region" description="Helical" evidence="1">
    <location>
        <begin position="178"/>
        <end position="198"/>
    </location>
</feature>
<feature type="transmembrane region" description="Helical" evidence="1">
    <location>
        <begin position="217"/>
        <end position="237"/>
    </location>
</feature>
<feature type="transmembrane region" description="Helical" evidence="1">
    <location>
        <begin position="239"/>
        <end position="259"/>
    </location>
</feature>
<feature type="region of interest" description="Disordered" evidence="2">
    <location>
        <begin position="270"/>
        <end position="320"/>
    </location>
</feature>
<feature type="compositionally biased region" description="Basic and acidic residues" evidence="2">
    <location>
        <begin position="294"/>
        <end position="309"/>
    </location>
</feature>
<feature type="lipid moiety-binding region" description="N-palmitoyl cysteine" evidence="1">
    <location>
        <position position="24"/>
    </location>
</feature>
<feature type="lipid moiety-binding region" description="S-diacylglycerol cysteine" evidence="1">
    <location>
        <position position="24"/>
    </location>
</feature>
<dbReference type="EMBL" id="AE005176">
    <property type="protein sequence ID" value="AAK04667.1"/>
    <property type="status" value="ALT_INIT"/>
    <property type="molecule type" value="Genomic_DNA"/>
</dbReference>
<dbReference type="PIR" id="A86696">
    <property type="entry name" value="A86696"/>
</dbReference>
<dbReference type="RefSeq" id="NP_266725.1">
    <property type="nucleotide sequence ID" value="NC_002662.1"/>
</dbReference>
<dbReference type="SMR" id="Q9CHZ9"/>
<dbReference type="PaxDb" id="272623-L164312"/>
<dbReference type="EnsemblBacteria" id="AAK04667">
    <property type="protein sequence ID" value="AAK04667"/>
    <property type="gene ID" value="L164312"/>
</dbReference>
<dbReference type="KEGG" id="lla:L164312"/>
<dbReference type="PATRIC" id="fig|272623.7.peg.609"/>
<dbReference type="eggNOG" id="COG0706">
    <property type="taxonomic scope" value="Bacteria"/>
</dbReference>
<dbReference type="HOGENOM" id="CLU_036138_5_1_9"/>
<dbReference type="OrthoDB" id="9780552at2"/>
<dbReference type="Proteomes" id="UP000002196">
    <property type="component" value="Chromosome"/>
</dbReference>
<dbReference type="GO" id="GO:0005886">
    <property type="term" value="C:plasma membrane"/>
    <property type="evidence" value="ECO:0007669"/>
    <property type="project" value="UniProtKB-SubCell"/>
</dbReference>
<dbReference type="GO" id="GO:0032977">
    <property type="term" value="F:membrane insertase activity"/>
    <property type="evidence" value="ECO:0007669"/>
    <property type="project" value="InterPro"/>
</dbReference>
<dbReference type="GO" id="GO:0051205">
    <property type="term" value="P:protein insertion into membrane"/>
    <property type="evidence" value="ECO:0007669"/>
    <property type="project" value="TreeGrafter"/>
</dbReference>
<dbReference type="GO" id="GO:0015031">
    <property type="term" value="P:protein transport"/>
    <property type="evidence" value="ECO:0007669"/>
    <property type="project" value="UniProtKB-KW"/>
</dbReference>
<dbReference type="CDD" id="cd20070">
    <property type="entry name" value="5TM_YidC_Alb3"/>
    <property type="match status" value="1"/>
</dbReference>
<dbReference type="HAMAP" id="MF_01811">
    <property type="entry name" value="YidC_type2"/>
    <property type="match status" value="1"/>
</dbReference>
<dbReference type="InterPro" id="IPR001708">
    <property type="entry name" value="YidC/ALB3/OXA1/COX18"/>
</dbReference>
<dbReference type="InterPro" id="IPR028055">
    <property type="entry name" value="YidC/Oxa/ALB_C"/>
</dbReference>
<dbReference type="InterPro" id="IPR023060">
    <property type="entry name" value="YidC/YidC1/YidC2_Firmicutes"/>
</dbReference>
<dbReference type="InterPro" id="IPR047196">
    <property type="entry name" value="YidC_ALB_C"/>
</dbReference>
<dbReference type="NCBIfam" id="NF002687">
    <property type="entry name" value="PRK02463.1"/>
    <property type="match status" value="1"/>
</dbReference>
<dbReference type="NCBIfam" id="TIGR03592">
    <property type="entry name" value="yidC_oxa1_cterm"/>
    <property type="match status" value="1"/>
</dbReference>
<dbReference type="PANTHER" id="PTHR12428:SF65">
    <property type="entry name" value="CYTOCHROME C OXIDASE ASSEMBLY PROTEIN COX18, MITOCHONDRIAL"/>
    <property type="match status" value="1"/>
</dbReference>
<dbReference type="PANTHER" id="PTHR12428">
    <property type="entry name" value="OXA1"/>
    <property type="match status" value="1"/>
</dbReference>
<dbReference type="Pfam" id="PF02096">
    <property type="entry name" value="60KD_IMP"/>
    <property type="match status" value="1"/>
</dbReference>
<dbReference type="PRINTS" id="PR00701">
    <property type="entry name" value="60KDINNERMP"/>
</dbReference>
<dbReference type="PROSITE" id="PS51257">
    <property type="entry name" value="PROKAR_LIPOPROTEIN"/>
    <property type="match status" value="1"/>
</dbReference>
<reference key="1">
    <citation type="journal article" date="2001" name="Genome Res.">
        <title>The complete genome sequence of the lactic acid bacterium Lactococcus lactis ssp. lactis IL1403.</title>
        <authorList>
            <person name="Bolotin A."/>
            <person name="Wincker P."/>
            <person name="Mauger S."/>
            <person name="Jaillon O."/>
            <person name="Malarme K."/>
            <person name="Weissenbach J."/>
            <person name="Ehrlich S.D."/>
            <person name="Sorokin A."/>
        </authorList>
    </citation>
    <scope>NUCLEOTIDE SEQUENCE [LARGE SCALE GENOMIC DNA]</scope>
    <source>
        <strain>IL1403</strain>
    </source>
</reference>
<comment type="function">
    <text evidence="1">Required for the insertion and/or proper folding and/or complex formation of integral membrane proteins into the membrane. Involved in integration of membrane proteins that insert both dependently and independently of the Sec translocase complex, as well as at least some lipoproteins.</text>
</comment>
<comment type="subcellular location">
    <subcellularLocation>
        <location evidence="1">Cell membrane</location>
        <topology evidence="1">Multi-pass membrane protein</topology>
    </subcellularLocation>
</comment>
<comment type="similarity">
    <text evidence="1">Belongs to the OXA1/ALB3/YidC family. Type 2 subfamily.</text>
</comment>
<comment type="sequence caution" evidence="3">
    <conflict type="erroneous initiation">
        <sequence resource="EMBL-CDS" id="AAK04667"/>
    </conflict>
    <text>Truncated N-terminus.</text>
</comment>
<sequence>MKNLKKKLTLTGLMTAGLLFLSGCVQTHVVDGVRVPTEAATHGITYNFLVRPMSAFVDLFANNLHMGYGWGIIFVTLIIRFLILPLGLNQAYKSTYMQEKMAYLAPVFAPLQERLKKAQTPEEKMAAQQALMAAQKDNGINMLSSIGCLPMLIQWPFFIALYNAAAYTTGISSSTFYGIPLGHPSVVLVIISGVLYFIQTWISTLSMTPEQKKSGMAMLIMSPAMIVVFSFMSPAGVALYWAVGGFVIVIQQIIITFIMKPRMRRRIDEEFTKNPPKINNEGLKDVTPTSVQENFKEITSERNEKERKSGGRNAGKQNRK</sequence>
<gene>
    <name evidence="1" type="primary">yidC2</name>
    <name type="ordered locus">LL0569</name>
    <name type="ORF">L164312</name>
</gene>
<organism>
    <name type="scientific">Lactococcus lactis subsp. lactis (strain IL1403)</name>
    <name type="common">Streptococcus lactis</name>
    <dbReference type="NCBI Taxonomy" id="272623"/>
    <lineage>
        <taxon>Bacteria</taxon>
        <taxon>Bacillati</taxon>
        <taxon>Bacillota</taxon>
        <taxon>Bacilli</taxon>
        <taxon>Lactobacillales</taxon>
        <taxon>Streptococcaceae</taxon>
        <taxon>Lactococcus</taxon>
    </lineage>
</organism>
<evidence type="ECO:0000255" key="1">
    <source>
        <dbReference type="HAMAP-Rule" id="MF_01811"/>
    </source>
</evidence>
<evidence type="ECO:0000256" key="2">
    <source>
        <dbReference type="SAM" id="MobiDB-lite"/>
    </source>
</evidence>
<evidence type="ECO:0000305" key="3"/>
<accession>Q9CHZ9</accession>
<keyword id="KW-1003">Cell membrane</keyword>
<keyword id="KW-0143">Chaperone</keyword>
<keyword id="KW-0449">Lipoprotein</keyword>
<keyword id="KW-0472">Membrane</keyword>
<keyword id="KW-0564">Palmitate</keyword>
<keyword id="KW-0653">Protein transport</keyword>
<keyword id="KW-1185">Reference proteome</keyword>
<keyword id="KW-0732">Signal</keyword>
<keyword id="KW-0812">Transmembrane</keyword>
<keyword id="KW-1133">Transmembrane helix</keyword>
<keyword id="KW-0813">Transport</keyword>
<protein>
    <recommendedName>
        <fullName evidence="1">Membrane protein insertase YidC 2</fullName>
    </recommendedName>
    <alternativeName>
        <fullName evidence="1">Foldase YidC 2</fullName>
    </alternativeName>
    <alternativeName>
        <fullName evidence="1">Membrane integrase YidC 2</fullName>
    </alternativeName>
    <alternativeName>
        <fullName evidence="1">Membrane protein YidC 2</fullName>
    </alternativeName>
</protein>
<proteinExistence type="inferred from homology"/>